<keyword id="KW-1003">Cell membrane</keyword>
<keyword id="KW-0963">Cytoplasm</keyword>
<keyword id="KW-0472">Membrane</keyword>
<keyword id="KW-1185">Reference proteome</keyword>
<keyword id="KW-0812">Transmembrane</keyword>
<keyword id="KW-1133">Transmembrane helix</keyword>
<comment type="function">
    <text evidence="2">Involved in cuticle formation and ensures cuticle shedding during larval development (PubMed:19357781). Plays a role in maintaining the hypodermis (PubMed:19357781). In association with vps-39, may play a role in vesicle tethering (PubMed:19357781).</text>
</comment>
<comment type="subunit">
    <text evidence="2">Interacts with vps-39.</text>
</comment>
<comment type="subcellular location">
    <subcellularLocation>
        <location evidence="4">Cell membrane</location>
        <topology evidence="1">Multi-pass membrane protein</topology>
    </subcellularLocation>
    <subcellularLocation>
        <location evidence="2">Cytoplasm</location>
    </subcellularLocation>
</comment>
<comment type="developmental stage">
    <text evidence="2">Temporally expressed in embryos and larvae (PubMed:19357781). Expression peaks prior to each larval molt (PubMed:19357781). In L4 larvae, expressed in the hypodermis, in the vulval and anal epithelium, in the excretory pore, the seam cells and at the seam cell boundary (PubMed:19357781). Not expressed in adults (PubMed:19357781).</text>
</comment>
<comment type="disruption phenotype">
    <text evidence="2">RNAi-mediated knockdown results in a squat body statue referred to as a dumpy phenotype, uncoordinated movements, and while animals can move in a sinusoidal manner, they cannot progress forward or backward, (referred to as a skiddy phenotype) (PubMed:19357781). Animals also display cuticle formation defects where the cuticle blisters at the point where the outer layers dissociate from the body, and furthermore the cuticle fails to shed and wraps tightly around the body (PubMed:19357781). In 10% of animals, the cuticle tapers in the posterior region of the body (PubMed:19357781). RNAi-mediated knockdown also results the formation of vesicle-like structures in the hypodermis, thickening of the hypodermis and in its degeneration, and as a consequence as hermaphrodites reach gravidity, the vulva protrudes and eventually ruptures, leading to death (PubMed:19357781). In addition, animals display seam cell fusion and function defects resulting from bifurcation of alae (PubMed:19357781). RNAi-mediated knockdown in males results in sensory ray defects where the rays fail to fully extend, and a reduced sized cuticular fan (PubMed:19357781).</text>
</comment>
<reference evidence="5" key="1">
    <citation type="journal article" date="1998" name="Science">
        <title>Genome sequence of the nematode C. elegans: a platform for investigating biology.</title>
        <authorList>
            <consortium name="The C. elegans sequencing consortium"/>
        </authorList>
    </citation>
    <scope>NUCLEOTIDE SEQUENCE [LARGE SCALE GENOMIC DNA]</scope>
    <source>
        <strain evidence="5">Bristol N2</strain>
    </source>
</reference>
<reference evidence="4" key="2">
    <citation type="journal article" date="2009" name="PLoS ONE">
        <title>CUTI-1: A novel tetraspan protein involved in C. elegans CUTicle formation and epithelial integrity.</title>
        <authorList>
            <person name="Fritz J.A."/>
            <person name="Behm C.A."/>
        </authorList>
    </citation>
    <scope>FUNCTION</scope>
    <scope>INTERACTION WITH VPS-39</scope>
    <scope>SUBCELLULAR LOCATION</scope>
    <scope>DEVELOPMENTAL STAGE</scope>
    <scope>DISRUPTION PHENOTYPE</scope>
</reference>
<protein>
    <recommendedName>
        <fullName evidence="4">Protein cuti-1</fullName>
    </recommendedName>
    <alternativeName>
        <fullName evidence="6">Cuticle and epithelial integrity protein 1</fullName>
    </alternativeName>
</protein>
<name>CUTI_CAEEL</name>
<sequence length="202" mass="22999">MPNDRVAPLPPNFVYSPHDKFYYAPATCNSMHYTTASYISAFIEFLVMGTGAICFYVMSHKSDSIGKWLFYIQAGITVLSLLTSALMAFGLWKENPQMLGSKLKFIEFIICFLLIWAVISIVCMAFGIQFTRQVFGIFGKVHRIEQDYGPIWPFNIAVVSFFTAAIAIWTRIIIQGAADYLYDKAYFADKQNVELRESSKTR</sequence>
<organism evidence="5">
    <name type="scientific">Caenorhabditis elegans</name>
    <dbReference type="NCBI Taxonomy" id="6239"/>
    <lineage>
        <taxon>Eukaryota</taxon>
        <taxon>Metazoa</taxon>
        <taxon>Ecdysozoa</taxon>
        <taxon>Nematoda</taxon>
        <taxon>Chromadorea</taxon>
        <taxon>Rhabditida</taxon>
        <taxon>Rhabditina</taxon>
        <taxon>Rhabditomorpha</taxon>
        <taxon>Rhabditoidea</taxon>
        <taxon>Rhabditidae</taxon>
        <taxon>Peloderinae</taxon>
        <taxon>Caenorhabditis</taxon>
    </lineage>
</organism>
<accession>O02051</accession>
<dbReference type="EMBL" id="BX284601">
    <property type="protein sequence ID" value="CCD73295.1"/>
    <property type="molecule type" value="Genomic_DNA"/>
</dbReference>
<dbReference type="RefSeq" id="NP_001370817.1">
    <property type="nucleotide sequence ID" value="NM_001383247.2"/>
</dbReference>
<dbReference type="RefSeq" id="NP_491844.1">
    <property type="nucleotide sequence ID" value="NM_059443.4"/>
</dbReference>
<dbReference type="SMR" id="O02051"/>
<dbReference type="FunCoup" id="O02051">
    <property type="interactions" value="76"/>
</dbReference>
<dbReference type="STRING" id="6239.ZC328.1.1"/>
<dbReference type="PaxDb" id="6239-ZC328.1"/>
<dbReference type="PeptideAtlas" id="O02051"/>
<dbReference type="EnsemblMetazoa" id="ZC328.1.1">
    <property type="protein sequence ID" value="ZC328.1.1"/>
    <property type="gene ID" value="WBGene00022591"/>
</dbReference>
<dbReference type="GeneID" id="172340"/>
<dbReference type="UCSC" id="ZC328.1">
    <property type="organism name" value="c. elegans"/>
</dbReference>
<dbReference type="AGR" id="WB:WBGene00022591"/>
<dbReference type="WormBase" id="ZC328.1">
    <property type="protein sequence ID" value="CE27347"/>
    <property type="gene ID" value="WBGene00022591"/>
    <property type="gene designation" value="cuti-1"/>
</dbReference>
<dbReference type="eggNOG" id="ENOG502S5IK">
    <property type="taxonomic scope" value="Eukaryota"/>
</dbReference>
<dbReference type="HOGENOM" id="CLU_1311457_0_0_1"/>
<dbReference type="InParanoid" id="O02051"/>
<dbReference type="OMA" id="HFGPIWP"/>
<dbReference type="OrthoDB" id="5772927at2759"/>
<dbReference type="PRO" id="PR:O02051"/>
<dbReference type="Proteomes" id="UP000001940">
    <property type="component" value="Chromosome I"/>
</dbReference>
<dbReference type="Bgee" id="WBGene00022591">
    <property type="expression patterns" value="Expressed in embryo and 3 other cell types or tissues"/>
</dbReference>
<dbReference type="GO" id="GO:0005737">
    <property type="term" value="C:cytoplasm"/>
    <property type="evidence" value="ECO:0000314"/>
    <property type="project" value="WormBase"/>
</dbReference>
<dbReference type="GO" id="GO:0005886">
    <property type="term" value="C:plasma membrane"/>
    <property type="evidence" value="ECO:0007669"/>
    <property type="project" value="UniProtKB-SubCell"/>
</dbReference>
<feature type="chain" id="PRO_0000451863" description="Protein cuti-1">
    <location>
        <begin position="1"/>
        <end position="202"/>
    </location>
</feature>
<feature type="topological domain" description="Cytoplasmic" evidence="4">
    <location>
        <begin position="1"/>
        <end position="37"/>
    </location>
</feature>
<feature type="transmembrane region" description="Helical" evidence="1">
    <location>
        <begin position="38"/>
        <end position="58"/>
    </location>
</feature>
<feature type="topological domain" description="Extracellular" evidence="4">
    <location>
        <begin position="59"/>
        <end position="68"/>
    </location>
</feature>
<feature type="transmembrane region" description="Helical" evidence="1">
    <location>
        <begin position="69"/>
        <end position="89"/>
    </location>
</feature>
<feature type="topological domain" description="Cytoplasmic" evidence="4">
    <location>
        <begin position="90"/>
        <end position="107"/>
    </location>
</feature>
<feature type="transmembrane region" description="Helical" evidence="1">
    <location>
        <begin position="108"/>
        <end position="128"/>
    </location>
</feature>
<feature type="topological domain" description="Extracellular" evidence="4">
    <location>
        <begin position="129"/>
        <end position="148"/>
    </location>
</feature>
<feature type="transmembrane region" description="Helical" evidence="1">
    <location>
        <begin position="149"/>
        <end position="169"/>
    </location>
</feature>
<feature type="topological domain" description="Cytoplasmic" evidence="4">
    <location>
        <begin position="170"/>
        <end position="202"/>
    </location>
</feature>
<evidence type="ECO:0000255" key="1"/>
<evidence type="ECO:0000269" key="2">
    <source>
    </source>
</evidence>
<evidence type="ECO:0000303" key="3">
    <source>
    </source>
</evidence>
<evidence type="ECO:0000305" key="4"/>
<evidence type="ECO:0000312" key="5">
    <source>
        <dbReference type="Proteomes" id="UP000001940"/>
    </source>
</evidence>
<evidence type="ECO:0000312" key="6">
    <source>
        <dbReference type="WormBase" id="ZC328.1"/>
    </source>
</evidence>
<proteinExistence type="evidence at protein level"/>
<gene>
    <name evidence="3 6" type="primary">cuti-1</name>
    <name evidence="6" type="ORF">ZC328.1</name>
</gene>